<comment type="function">
    <text evidence="2 3">Terpene synthase that converts its substrate farnesyl diphosphate (FPP) into the sesquiterpene beta-barbatene as a major product as well as (E)-beta-farnesene as a minor product (PubMed:27790999, PubMed:31621716). Is also able to convert geranyl diphosphate (GPP) into a mixture of monoterpenes including (Z)-beta-ocimene, linalool, beta-myrcene, limonene and alpha-terpineol (PubMed:27790999).</text>
</comment>
<comment type="catalytic activity">
    <reaction evidence="2 3">
        <text>(2E,6E)-farnesyl diphosphate = (-)-beta-barbatene + diphosphate</text>
        <dbReference type="Rhea" id="RHEA:73983"/>
        <dbReference type="ChEBI" id="CHEBI:33019"/>
        <dbReference type="ChEBI" id="CHEBI:175763"/>
        <dbReference type="ChEBI" id="CHEBI:193072"/>
    </reaction>
    <physiologicalReaction direction="left-to-right" evidence="2 3">
        <dbReference type="Rhea" id="RHEA:73984"/>
    </physiologicalReaction>
</comment>
<comment type="catalytic activity">
    <reaction evidence="2">
        <text>(2E,6E)-farnesyl diphosphate = (E)-beta-farnesene + diphosphate</text>
        <dbReference type="Rhea" id="RHEA:27425"/>
        <dbReference type="ChEBI" id="CHEBI:10418"/>
        <dbReference type="ChEBI" id="CHEBI:33019"/>
        <dbReference type="ChEBI" id="CHEBI:175763"/>
        <dbReference type="EC" id="4.2.3.47"/>
    </reaction>
    <physiologicalReaction direction="left-to-right" evidence="2">
        <dbReference type="Rhea" id="RHEA:27426"/>
    </physiologicalReaction>
</comment>
<comment type="catalytic activity">
    <reaction evidence="2">
        <text>(2E)-geranyl diphosphate = (Z)-beta-ocimene + diphosphate</text>
        <dbReference type="Rhea" id="RHEA:68824"/>
        <dbReference type="ChEBI" id="CHEBI:33019"/>
        <dbReference type="ChEBI" id="CHEBI:58057"/>
        <dbReference type="ChEBI" id="CHEBI:87574"/>
    </reaction>
    <physiologicalReaction direction="left-to-right" evidence="2">
        <dbReference type="Rhea" id="RHEA:68825"/>
    </physiologicalReaction>
</comment>
<comment type="catalytic activity">
    <reaction evidence="2">
        <text>(2E)-geranyl diphosphate + H2O = linalool + diphosphate</text>
        <dbReference type="Rhea" id="RHEA:68708"/>
        <dbReference type="ChEBI" id="CHEBI:15377"/>
        <dbReference type="ChEBI" id="CHEBI:17580"/>
        <dbReference type="ChEBI" id="CHEBI:33019"/>
        <dbReference type="ChEBI" id="CHEBI:58057"/>
    </reaction>
    <physiologicalReaction direction="left-to-right" evidence="2">
        <dbReference type="Rhea" id="RHEA:68709"/>
    </physiologicalReaction>
</comment>
<comment type="catalytic activity">
    <reaction evidence="2">
        <text>(2E)-geranyl diphosphate = beta-myrcene + diphosphate</text>
        <dbReference type="Rhea" id="RHEA:16965"/>
        <dbReference type="ChEBI" id="CHEBI:17221"/>
        <dbReference type="ChEBI" id="CHEBI:33019"/>
        <dbReference type="ChEBI" id="CHEBI:58057"/>
        <dbReference type="EC" id="4.2.3.15"/>
    </reaction>
    <physiologicalReaction direction="left-to-right" evidence="2">
        <dbReference type="Rhea" id="RHEA:16966"/>
    </physiologicalReaction>
</comment>
<comment type="induction">
    <text evidence="2">Expression is almost undetectable in vegetatively growing cells and increases during development induced by starvation (PubMed:27790999). Expression is highest during he ultimate stage of mature fruiting body (approximately 24 hours after induction) (PubMed:27790999).</text>
</comment>
<comment type="domain">
    <text evidence="6">Contains several highly conserved motifs that are important for catalytic activity including the aspartate-rich 'DDxx(x)D/E' motif and the 'NDxxSxxxD/E' motif, both of which are involved in complexing metal ions to coordinate the binding of the isoprenyl diphosphate substrate in the active site.</text>
</comment>
<comment type="similarity">
    <text evidence="5">Belongs to the terpene synthase family.</text>
</comment>
<proteinExistence type="evidence at protein level"/>
<sequence>MYSLHDFKFPEDWIEPPANDKCIYTCYKEVVDFKLFEENKKTLEYYYGTISSTIYLYPLCNYEQLLVASRYLTVCFVVDDFLESKLTNPDDSRELIKKLEHIFMDGNFYDSNNISNIEKYVLYFRETTKQFVGEKIEFFNQFLKFIIDWINSINPFNRADNLNNYDSYNFFKRTNSGTYVSLSVAMLLYPNSKIDPKIWINPRFDRFATNGGYQMATMNDCASYAKEIRNNNHLTNPLHFLQNQVGSFDNVYKVILKFNDEIMNQICEDERILLLECPIEQRDDLKLLTRSMKLILGGNYLWSLQCSRYVDINSPFIEQRSNDPNVIAYEKIVDKILLK</sequence>
<organism>
    <name type="scientific">Dictyostelium discoideum</name>
    <name type="common">Social amoeba</name>
    <dbReference type="NCBI Taxonomy" id="44689"/>
    <lineage>
        <taxon>Eukaryota</taxon>
        <taxon>Amoebozoa</taxon>
        <taxon>Evosea</taxon>
        <taxon>Eumycetozoa</taxon>
        <taxon>Dictyostelia</taxon>
        <taxon>Dictyosteliales</taxon>
        <taxon>Dictyosteliaceae</taxon>
        <taxon>Dictyostelium</taxon>
    </lineage>
</organism>
<name>TPS9_DICDI</name>
<keyword id="KW-0456">Lyase</keyword>
<keyword id="KW-0479">Metal-binding</keyword>
<protein>
    <recommendedName>
        <fullName evidence="4">Terpene synthase 9</fullName>
        <ecNumber evidence="2">4.2.3.-</ecNumber>
        <ecNumber evidence="2">4.2.3.15</ecNumber>
        <ecNumber evidence="2">4.2.3.47</ecNumber>
    </recommendedName>
</protein>
<evidence type="ECO:0000250" key="1">
    <source>
        <dbReference type="UniProtKB" id="Q54BE5"/>
    </source>
</evidence>
<evidence type="ECO:0000269" key="2">
    <source>
    </source>
</evidence>
<evidence type="ECO:0000269" key="3">
    <source>
    </source>
</evidence>
<evidence type="ECO:0000303" key="4">
    <source>
    </source>
</evidence>
<evidence type="ECO:0000305" key="5"/>
<evidence type="ECO:0000305" key="6">
    <source>
    </source>
</evidence>
<dbReference type="EC" id="4.2.3.-" evidence="2"/>
<dbReference type="EC" id="4.2.3.15" evidence="2"/>
<dbReference type="EC" id="4.2.3.47" evidence="2"/>
<dbReference type="EMBL" id="KX364382">
    <property type="protein sequence ID" value="APC23393.1"/>
    <property type="molecule type" value="mRNA"/>
</dbReference>
<dbReference type="EMBL" id="AAFI01000052">
    <property type="protein sequence ID" value="EAL68312.1"/>
    <property type="molecule type" value="Genomic_DNA"/>
</dbReference>
<dbReference type="RefSeq" id="XP_642260.1">
    <property type="nucleotide sequence ID" value="XM_637168.1"/>
</dbReference>
<dbReference type="SMR" id="Q54YE2"/>
<dbReference type="PaxDb" id="44689-DDB0205344"/>
<dbReference type="KEGG" id="ddi:DDB_G0278279"/>
<dbReference type="dictyBase" id="DDB_G0278279">
    <property type="gene designation" value="tps9"/>
</dbReference>
<dbReference type="VEuPathDB" id="AmoebaDB:DDB_G0278279"/>
<dbReference type="HOGENOM" id="CLU_070708_0_0_1"/>
<dbReference type="InParanoid" id="Q54YE2"/>
<dbReference type="OMA" id="WALESTR"/>
<dbReference type="PRO" id="PR:Q54YE2"/>
<dbReference type="GO" id="GO:0102881">
    <property type="term" value="F:(+)-beta-barbatene synthase activity"/>
    <property type="evidence" value="ECO:0000314"/>
    <property type="project" value="dictyBase"/>
</dbReference>
<dbReference type="GO" id="GO:0046872">
    <property type="term" value="F:metal ion binding"/>
    <property type="evidence" value="ECO:0007669"/>
    <property type="project" value="UniProtKB-KW"/>
</dbReference>
<dbReference type="GO" id="GO:0010333">
    <property type="term" value="F:terpene synthase activity"/>
    <property type="evidence" value="ECO:0000318"/>
    <property type="project" value="GO_Central"/>
</dbReference>
<dbReference type="GO" id="GO:0051762">
    <property type="term" value="P:sesquiterpene biosynthetic process"/>
    <property type="evidence" value="ECO:0000304"/>
    <property type="project" value="dictyBase"/>
</dbReference>
<dbReference type="FunFam" id="1.10.600.10:FF:000076">
    <property type="entry name" value="Terpene synthase"/>
    <property type="match status" value="1"/>
</dbReference>
<dbReference type="Gene3D" id="1.10.600.10">
    <property type="entry name" value="Farnesyl Diphosphate Synthase"/>
    <property type="match status" value="1"/>
</dbReference>
<dbReference type="InterPro" id="IPR008949">
    <property type="entry name" value="Isoprenoid_synthase_dom_sf"/>
</dbReference>
<dbReference type="InterPro" id="IPR034686">
    <property type="entry name" value="Terpene_cyclase-like_2"/>
</dbReference>
<dbReference type="PANTHER" id="PTHR35201">
    <property type="entry name" value="TERPENE SYNTHASE"/>
    <property type="match status" value="1"/>
</dbReference>
<dbReference type="PANTHER" id="PTHR35201:SF2">
    <property type="entry name" value="TERPENE SYNTHASE 1-RELATED"/>
    <property type="match status" value="1"/>
</dbReference>
<dbReference type="Pfam" id="PF19086">
    <property type="entry name" value="Terpene_syn_C_2"/>
    <property type="match status" value="1"/>
</dbReference>
<dbReference type="SUPFAM" id="SSF48576">
    <property type="entry name" value="Terpenoid synthases"/>
    <property type="match status" value="1"/>
</dbReference>
<accession>Q54YE2</accession>
<reference key="1">
    <citation type="journal article" date="2016" name="Proc. Natl. Acad. Sci. U.S.A.">
        <title>Terpene synthase genes in eukaryotes beyond plants and fungi: Occurrence in social amoebae.</title>
        <authorList>
            <person name="Chen X."/>
            <person name="Koellner T.G."/>
            <person name="Jia Q."/>
            <person name="Norris A."/>
            <person name="Santhanam B."/>
            <person name="Rabe P."/>
            <person name="Dickschat J.S."/>
            <person name="Shaulsky G."/>
            <person name="Gershenzon J."/>
            <person name="Chen F."/>
        </authorList>
    </citation>
    <scope>NUCLEOTIDE SEQUENCE [MRNA]</scope>
    <scope>INDUCTION</scope>
    <scope>FUNCTION</scope>
    <scope>CATALYTIC ACTIVITY</scope>
    <scope>DOMAIN</scope>
    <source>
        <strain>AX4</strain>
    </source>
</reference>
<reference key="2">
    <citation type="journal article" date="2005" name="Nature">
        <title>The genome of the social amoeba Dictyostelium discoideum.</title>
        <authorList>
            <person name="Eichinger L."/>
            <person name="Pachebat J.A."/>
            <person name="Gloeckner G."/>
            <person name="Rajandream M.A."/>
            <person name="Sucgang R."/>
            <person name="Berriman M."/>
            <person name="Song J."/>
            <person name="Olsen R."/>
            <person name="Szafranski K."/>
            <person name="Xu Q."/>
            <person name="Tunggal B."/>
            <person name="Kummerfeld S."/>
            <person name="Madera M."/>
            <person name="Konfortov B.A."/>
            <person name="Rivero F."/>
            <person name="Bankier A.T."/>
            <person name="Lehmann R."/>
            <person name="Hamlin N."/>
            <person name="Davies R."/>
            <person name="Gaudet P."/>
            <person name="Fey P."/>
            <person name="Pilcher K."/>
            <person name="Chen G."/>
            <person name="Saunders D."/>
            <person name="Sodergren E.J."/>
            <person name="Davis P."/>
            <person name="Kerhornou A."/>
            <person name="Nie X."/>
            <person name="Hall N."/>
            <person name="Anjard C."/>
            <person name="Hemphill L."/>
            <person name="Bason N."/>
            <person name="Farbrother P."/>
            <person name="Desany B."/>
            <person name="Just E."/>
            <person name="Morio T."/>
            <person name="Rost R."/>
            <person name="Churcher C.M."/>
            <person name="Cooper J."/>
            <person name="Haydock S."/>
            <person name="van Driessche N."/>
            <person name="Cronin A."/>
            <person name="Goodhead I."/>
            <person name="Muzny D.M."/>
            <person name="Mourier T."/>
            <person name="Pain A."/>
            <person name="Lu M."/>
            <person name="Harper D."/>
            <person name="Lindsay R."/>
            <person name="Hauser H."/>
            <person name="James K.D."/>
            <person name="Quiles M."/>
            <person name="Madan Babu M."/>
            <person name="Saito T."/>
            <person name="Buchrieser C."/>
            <person name="Wardroper A."/>
            <person name="Felder M."/>
            <person name="Thangavelu M."/>
            <person name="Johnson D."/>
            <person name="Knights A."/>
            <person name="Loulseged H."/>
            <person name="Mungall K.L."/>
            <person name="Oliver K."/>
            <person name="Price C."/>
            <person name="Quail M.A."/>
            <person name="Urushihara H."/>
            <person name="Hernandez J."/>
            <person name="Rabbinowitsch E."/>
            <person name="Steffen D."/>
            <person name="Sanders M."/>
            <person name="Ma J."/>
            <person name="Kohara Y."/>
            <person name="Sharp S."/>
            <person name="Simmonds M.N."/>
            <person name="Spiegler S."/>
            <person name="Tivey A."/>
            <person name="Sugano S."/>
            <person name="White B."/>
            <person name="Walker D."/>
            <person name="Woodward J.R."/>
            <person name="Winckler T."/>
            <person name="Tanaka Y."/>
            <person name="Shaulsky G."/>
            <person name="Schleicher M."/>
            <person name="Weinstock G.M."/>
            <person name="Rosenthal A."/>
            <person name="Cox E.C."/>
            <person name="Chisholm R.L."/>
            <person name="Gibbs R.A."/>
            <person name="Loomis W.F."/>
            <person name="Platzer M."/>
            <person name="Kay R.R."/>
            <person name="Williams J.G."/>
            <person name="Dear P.H."/>
            <person name="Noegel A.A."/>
            <person name="Barrell B.G."/>
            <person name="Kuspa A."/>
        </authorList>
    </citation>
    <scope>NUCLEOTIDE SEQUENCE [LARGE SCALE GENOMIC DNA]</scope>
    <source>
        <strain>AX4</strain>
    </source>
</reference>
<reference key="3">
    <citation type="journal article" date="2019" name="Chem. Commun. (Camb.)">
        <title>Characterisation of three terpene synthases for beta-barbatene, beta-araneosene and nephthenol from social amoebae.</title>
        <authorList>
            <person name="Rinkel J."/>
            <person name="Koellner T.G."/>
            <person name="Chen F."/>
            <person name="Dickschat J.S."/>
        </authorList>
    </citation>
    <scope>FUNCTION</scope>
    <scope>CATALYTIC ACTIVITY</scope>
</reference>
<feature type="chain" id="PRO_0000456824" description="Terpene synthase 9">
    <location>
        <begin position="1"/>
        <end position="339"/>
    </location>
</feature>
<feature type="short sequence motif" description="DDxx(x)D/E motif" evidence="1">
    <location>
        <begin position="79"/>
        <end position="84"/>
    </location>
</feature>
<feature type="short sequence motif" description="NDxxSxxxD/E motif" evidence="1">
    <location>
        <begin position="219"/>
        <end position="227"/>
    </location>
</feature>
<gene>
    <name evidence="4" type="primary">TPS9</name>
    <name type="ORF">DDB0205344</name>
</gene>